<protein>
    <recommendedName>
        <fullName evidence="1">Acyl carrier protein</fullName>
        <shortName evidence="1">ACP</shortName>
    </recommendedName>
</protein>
<feature type="chain" id="PRO_1000066549" description="Acyl carrier protein">
    <location>
        <begin position="1"/>
        <end position="81"/>
    </location>
</feature>
<feature type="domain" description="Carrier" evidence="2">
    <location>
        <begin position="2"/>
        <end position="80"/>
    </location>
</feature>
<feature type="modified residue" description="O-(pantetheine 4'-phosphoryl)serine" evidence="2">
    <location>
        <position position="40"/>
    </location>
</feature>
<keyword id="KW-0963">Cytoplasm</keyword>
<keyword id="KW-0275">Fatty acid biosynthesis</keyword>
<keyword id="KW-0276">Fatty acid metabolism</keyword>
<keyword id="KW-0444">Lipid biosynthesis</keyword>
<keyword id="KW-0443">Lipid metabolism</keyword>
<keyword id="KW-0596">Phosphopantetheine</keyword>
<keyword id="KW-0597">Phosphoprotein</keyword>
<accession>A1R7F3</accession>
<comment type="function">
    <text evidence="1">Carrier of the growing fatty acid chain in fatty acid biosynthesis.</text>
</comment>
<comment type="pathway">
    <text evidence="1">Lipid metabolism; fatty acid biosynthesis.</text>
</comment>
<comment type="subcellular location">
    <subcellularLocation>
        <location evidence="1">Cytoplasm</location>
    </subcellularLocation>
</comment>
<comment type="PTM">
    <text evidence="1">4'-phosphopantetheine is transferred from CoA to a specific serine of apo-ACP by AcpS. This modification is essential for activity because fatty acids are bound in thioester linkage to the sulfhydryl of the prosthetic group.</text>
</comment>
<comment type="similarity">
    <text evidence="1">Belongs to the acyl carrier protein (ACP) family.</text>
</comment>
<organism>
    <name type="scientific">Paenarthrobacter aurescens (strain TC1)</name>
    <dbReference type="NCBI Taxonomy" id="290340"/>
    <lineage>
        <taxon>Bacteria</taxon>
        <taxon>Bacillati</taxon>
        <taxon>Actinomycetota</taxon>
        <taxon>Actinomycetes</taxon>
        <taxon>Micrococcales</taxon>
        <taxon>Micrococcaceae</taxon>
        <taxon>Paenarthrobacter</taxon>
    </lineage>
</organism>
<evidence type="ECO:0000255" key="1">
    <source>
        <dbReference type="HAMAP-Rule" id="MF_01217"/>
    </source>
</evidence>
<evidence type="ECO:0000255" key="2">
    <source>
        <dbReference type="PROSITE-ProRule" id="PRU00258"/>
    </source>
</evidence>
<name>ACP_PAEAT</name>
<dbReference type="EMBL" id="CP000474">
    <property type="protein sequence ID" value="ABM07211.1"/>
    <property type="molecule type" value="Genomic_DNA"/>
</dbReference>
<dbReference type="RefSeq" id="WP_011692310.1">
    <property type="nucleotide sequence ID" value="NC_008711.1"/>
</dbReference>
<dbReference type="SMR" id="A1R7F3"/>
<dbReference type="STRING" id="290340.AAur_2437"/>
<dbReference type="KEGG" id="aau:AAur_2437"/>
<dbReference type="eggNOG" id="COG0236">
    <property type="taxonomic scope" value="Bacteria"/>
</dbReference>
<dbReference type="HOGENOM" id="CLU_108696_5_6_11"/>
<dbReference type="OrthoDB" id="9804551at2"/>
<dbReference type="UniPathway" id="UPA00094"/>
<dbReference type="Proteomes" id="UP000000637">
    <property type="component" value="Chromosome"/>
</dbReference>
<dbReference type="GO" id="GO:0005829">
    <property type="term" value="C:cytosol"/>
    <property type="evidence" value="ECO:0007669"/>
    <property type="project" value="TreeGrafter"/>
</dbReference>
<dbReference type="GO" id="GO:0016020">
    <property type="term" value="C:membrane"/>
    <property type="evidence" value="ECO:0007669"/>
    <property type="project" value="GOC"/>
</dbReference>
<dbReference type="GO" id="GO:0000035">
    <property type="term" value="F:acyl binding"/>
    <property type="evidence" value="ECO:0007669"/>
    <property type="project" value="TreeGrafter"/>
</dbReference>
<dbReference type="GO" id="GO:0000036">
    <property type="term" value="F:acyl carrier activity"/>
    <property type="evidence" value="ECO:0007669"/>
    <property type="project" value="UniProtKB-UniRule"/>
</dbReference>
<dbReference type="GO" id="GO:0009245">
    <property type="term" value="P:lipid A biosynthetic process"/>
    <property type="evidence" value="ECO:0007669"/>
    <property type="project" value="TreeGrafter"/>
</dbReference>
<dbReference type="Gene3D" id="1.10.1200.10">
    <property type="entry name" value="ACP-like"/>
    <property type="match status" value="1"/>
</dbReference>
<dbReference type="HAMAP" id="MF_01217">
    <property type="entry name" value="Acyl_carrier"/>
    <property type="match status" value="1"/>
</dbReference>
<dbReference type="InterPro" id="IPR003231">
    <property type="entry name" value="ACP"/>
</dbReference>
<dbReference type="InterPro" id="IPR036736">
    <property type="entry name" value="ACP-like_sf"/>
</dbReference>
<dbReference type="InterPro" id="IPR009081">
    <property type="entry name" value="PP-bd_ACP"/>
</dbReference>
<dbReference type="NCBIfam" id="NF002147">
    <property type="entry name" value="PRK00982.1-1"/>
    <property type="match status" value="1"/>
</dbReference>
<dbReference type="NCBIfam" id="NF002150">
    <property type="entry name" value="PRK00982.1-4"/>
    <property type="match status" value="1"/>
</dbReference>
<dbReference type="PANTHER" id="PTHR20863">
    <property type="entry name" value="ACYL CARRIER PROTEIN"/>
    <property type="match status" value="1"/>
</dbReference>
<dbReference type="PANTHER" id="PTHR20863:SF76">
    <property type="entry name" value="CARRIER DOMAIN-CONTAINING PROTEIN"/>
    <property type="match status" value="1"/>
</dbReference>
<dbReference type="Pfam" id="PF00550">
    <property type="entry name" value="PP-binding"/>
    <property type="match status" value="1"/>
</dbReference>
<dbReference type="SUPFAM" id="SSF47336">
    <property type="entry name" value="ACP-like"/>
    <property type="match status" value="1"/>
</dbReference>
<dbReference type="PROSITE" id="PS50075">
    <property type="entry name" value="CARRIER"/>
    <property type="match status" value="1"/>
</dbReference>
<sequence>MASNEEILAGLAEIVNEETGLATEAVELDKSFTEDLDIDSISMMTIVVNAEEKFGVRIPDEEVKNLKTVGDAVSFIANAQA</sequence>
<reference key="1">
    <citation type="journal article" date="2006" name="PLoS Genet.">
        <title>Secrets of soil survival revealed by the genome sequence of Arthrobacter aurescens TC1.</title>
        <authorList>
            <person name="Mongodin E.F."/>
            <person name="Shapir N."/>
            <person name="Daugherty S.C."/>
            <person name="DeBoy R.T."/>
            <person name="Emerson J.B."/>
            <person name="Shvartzbeyn A."/>
            <person name="Radune D."/>
            <person name="Vamathevan J."/>
            <person name="Riggs F."/>
            <person name="Grinberg V."/>
            <person name="Khouri H.M."/>
            <person name="Wackett L.P."/>
            <person name="Nelson K.E."/>
            <person name="Sadowsky M.J."/>
        </authorList>
    </citation>
    <scope>NUCLEOTIDE SEQUENCE [LARGE SCALE GENOMIC DNA]</scope>
    <source>
        <strain>TC1</strain>
    </source>
</reference>
<gene>
    <name evidence="1" type="primary">acpP</name>
    <name type="ordered locus">AAur_2437</name>
</gene>
<proteinExistence type="inferred from homology"/>